<reference key="1">
    <citation type="journal article" date="2008" name="J. Bacteriol.">
        <title>Genome of the actinomycete plant pathogen Clavibacter michiganensis subsp. sepedonicus suggests recent niche adaptation.</title>
        <authorList>
            <person name="Bentley S.D."/>
            <person name="Corton C."/>
            <person name="Brown S.E."/>
            <person name="Barron A."/>
            <person name="Clark L."/>
            <person name="Doggett J."/>
            <person name="Harris B."/>
            <person name="Ormond D."/>
            <person name="Quail M.A."/>
            <person name="May G."/>
            <person name="Francis D."/>
            <person name="Knudson D."/>
            <person name="Parkhill J."/>
            <person name="Ishimaru C.A."/>
        </authorList>
    </citation>
    <scope>NUCLEOTIDE SEQUENCE [LARGE SCALE GENOMIC DNA]</scope>
    <source>
        <strain>ATCC 33113 / DSM 20744 / JCM 9667 / LMG 2889 / ICMP 2535 / C-1</strain>
    </source>
</reference>
<sequence length="93" mass="10570">MPRSLKKGPFVDDHLLRKVISANEASSKNVIKTWSRRSMIIPAMLGHTIAVHDGRKHVPVFVTESMVGHKLGEFALTRTFRGHVKDDKKGRRR</sequence>
<gene>
    <name evidence="1" type="primary">rpsS</name>
    <name type="ordered locus">CMS0287</name>
</gene>
<organism>
    <name type="scientific">Clavibacter sepedonicus</name>
    <name type="common">Clavibacter michiganensis subsp. sepedonicus</name>
    <dbReference type="NCBI Taxonomy" id="31964"/>
    <lineage>
        <taxon>Bacteria</taxon>
        <taxon>Bacillati</taxon>
        <taxon>Actinomycetota</taxon>
        <taxon>Actinomycetes</taxon>
        <taxon>Micrococcales</taxon>
        <taxon>Microbacteriaceae</taxon>
        <taxon>Clavibacter</taxon>
    </lineage>
</organism>
<dbReference type="EMBL" id="AM849034">
    <property type="protein sequence ID" value="CAQ00408.1"/>
    <property type="molecule type" value="Genomic_DNA"/>
</dbReference>
<dbReference type="RefSeq" id="WP_012039302.1">
    <property type="nucleotide sequence ID" value="NZ_MZMN01000003.1"/>
</dbReference>
<dbReference type="SMR" id="B0RB43"/>
<dbReference type="STRING" id="31964.CMS0287"/>
<dbReference type="GeneID" id="92984325"/>
<dbReference type="KEGG" id="cms:CMS0287"/>
<dbReference type="eggNOG" id="COG0185">
    <property type="taxonomic scope" value="Bacteria"/>
</dbReference>
<dbReference type="HOGENOM" id="CLU_144911_0_1_11"/>
<dbReference type="OrthoDB" id="9797833at2"/>
<dbReference type="Proteomes" id="UP000001318">
    <property type="component" value="Chromosome"/>
</dbReference>
<dbReference type="GO" id="GO:0005737">
    <property type="term" value="C:cytoplasm"/>
    <property type="evidence" value="ECO:0007669"/>
    <property type="project" value="UniProtKB-ARBA"/>
</dbReference>
<dbReference type="GO" id="GO:0015935">
    <property type="term" value="C:small ribosomal subunit"/>
    <property type="evidence" value="ECO:0007669"/>
    <property type="project" value="InterPro"/>
</dbReference>
<dbReference type="GO" id="GO:0019843">
    <property type="term" value="F:rRNA binding"/>
    <property type="evidence" value="ECO:0007669"/>
    <property type="project" value="UniProtKB-UniRule"/>
</dbReference>
<dbReference type="GO" id="GO:0003735">
    <property type="term" value="F:structural constituent of ribosome"/>
    <property type="evidence" value="ECO:0007669"/>
    <property type="project" value="InterPro"/>
</dbReference>
<dbReference type="GO" id="GO:0000028">
    <property type="term" value="P:ribosomal small subunit assembly"/>
    <property type="evidence" value="ECO:0007669"/>
    <property type="project" value="TreeGrafter"/>
</dbReference>
<dbReference type="GO" id="GO:0006412">
    <property type="term" value="P:translation"/>
    <property type="evidence" value="ECO:0007669"/>
    <property type="project" value="UniProtKB-UniRule"/>
</dbReference>
<dbReference type="FunFam" id="3.30.860.10:FF:000001">
    <property type="entry name" value="30S ribosomal protein S19"/>
    <property type="match status" value="1"/>
</dbReference>
<dbReference type="Gene3D" id="3.30.860.10">
    <property type="entry name" value="30s Ribosomal Protein S19, Chain A"/>
    <property type="match status" value="1"/>
</dbReference>
<dbReference type="HAMAP" id="MF_00531">
    <property type="entry name" value="Ribosomal_uS19"/>
    <property type="match status" value="1"/>
</dbReference>
<dbReference type="InterPro" id="IPR002222">
    <property type="entry name" value="Ribosomal_uS19"/>
</dbReference>
<dbReference type="InterPro" id="IPR005732">
    <property type="entry name" value="Ribosomal_uS19_bac-type"/>
</dbReference>
<dbReference type="InterPro" id="IPR020934">
    <property type="entry name" value="Ribosomal_uS19_CS"/>
</dbReference>
<dbReference type="InterPro" id="IPR023575">
    <property type="entry name" value="Ribosomal_uS19_SF"/>
</dbReference>
<dbReference type="NCBIfam" id="TIGR01050">
    <property type="entry name" value="rpsS_bact"/>
    <property type="match status" value="1"/>
</dbReference>
<dbReference type="PANTHER" id="PTHR11880">
    <property type="entry name" value="RIBOSOMAL PROTEIN S19P FAMILY MEMBER"/>
    <property type="match status" value="1"/>
</dbReference>
<dbReference type="PANTHER" id="PTHR11880:SF8">
    <property type="entry name" value="SMALL RIBOSOMAL SUBUNIT PROTEIN US19M"/>
    <property type="match status" value="1"/>
</dbReference>
<dbReference type="Pfam" id="PF00203">
    <property type="entry name" value="Ribosomal_S19"/>
    <property type="match status" value="1"/>
</dbReference>
<dbReference type="PIRSF" id="PIRSF002144">
    <property type="entry name" value="Ribosomal_S19"/>
    <property type="match status" value="1"/>
</dbReference>
<dbReference type="PRINTS" id="PR00975">
    <property type="entry name" value="RIBOSOMALS19"/>
</dbReference>
<dbReference type="SUPFAM" id="SSF54570">
    <property type="entry name" value="Ribosomal protein S19"/>
    <property type="match status" value="1"/>
</dbReference>
<dbReference type="PROSITE" id="PS00323">
    <property type="entry name" value="RIBOSOMAL_S19"/>
    <property type="match status" value="1"/>
</dbReference>
<keyword id="KW-0687">Ribonucleoprotein</keyword>
<keyword id="KW-0689">Ribosomal protein</keyword>
<keyword id="KW-0694">RNA-binding</keyword>
<keyword id="KW-0699">rRNA-binding</keyword>
<protein>
    <recommendedName>
        <fullName evidence="1">Small ribosomal subunit protein uS19</fullName>
    </recommendedName>
    <alternativeName>
        <fullName evidence="2">30S ribosomal protein S19</fullName>
    </alternativeName>
</protein>
<name>RS19_CLASE</name>
<evidence type="ECO:0000255" key="1">
    <source>
        <dbReference type="HAMAP-Rule" id="MF_00531"/>
    </source>
</evidence>
<evidence type="ECO:0000305" key="2"/>
<proteinExistence type="inferred from homology"/>
<accession>B0RB43</accession>
<feature type="chain" id="PRO_1000081762" description="Small ribosomal subunit protein uS19">
    <location>
        <begin position="1"/>
        <end position="93"/>
    </location>
</feature>
<comment type="function">
    <text evidence="1">Protein S19 forms a complex with S13 that binds strongly to the 16S ribosomal RNA.</text>
</comment>
<comment type="similarity">
    <text evidence="1">Belongs to the universal ribosomal protein uS19 family.</text>
</comment>